<protein>
    <recommendedName>
        <fullName evidence="1">3-isopropylmalate dehydratase large subunit</fullName>
        <ecNumber evidence="1">4.2.1.33</ecNumber>
    </recommendedName>
    <alternativeName>
        <fullName evidence="1">Alpha-IPM isomerase</fullName>
        <shortName evidence="1">IPMI</shortName>
    </alternativeName>
    <alternativeName>
        <fullName evidence="1">Isopropylmalate isomerase</fullName>
    </alternativeName>
</protein>
<dbReference type="EC" id="4.2.1.33" evidence="1"/>
<dbReference type="EMBL" id="AB017135">
    <property type="protein sequence ID" value="BAA37138.1"/>
    <property type="molecule type" value="Genomic_DNA"/>
</dbReference>
<dbReference type="EMBL" id="AP008226">
    <property type="protein sequence ID" value="BAD71051.1"/>
    <property type="molecule type" value="Genomic_DNA"/>
</dbReference>
<dbReference type="RefSeq" id="WP_011173294.1">
    <property type="nucleotide sequence ID" value="NC_006461.1"/>
</dbReference>
<dbReference type="RefSeq" id="YP_144494.1">
    <property type="nucleotide sequence ID" value="NC_006461.1"/>
</dbReference>
<dbReference type="SMR" id="Q9ZND5"/>
<dbReference type="EnsemblBacteria" id="BAD71051">
    <property type="protein sequence ID" value="BAD71051"/>
    <property type="gene ID" value="BAD71051"/>
</dbReference>
<dbReference type="GeneID" id="3168997"/>
<dbReference type="KEGG" id="ttj:TTHA1228"/>
<dbReference type="PATRIC" id="fig|300852.9.peg.1207"/>
<dbReference type="eggNOG" id="COG0065">
    <property type="taxonomic scope" value="Bacteria"/>
</dbReference>
<dbReference type="HOGENOM" id="CLU_006714_3_4_0"/>
<dbReference type="PhylomeDB" id="Q9ZND5"/>
<dbReference type="UniPathway" id="UPA00048">
    <property type="reaction ID" value="UER00071"/>
</dbReference>
<dbReference type="Proteomes" id="UP000000532">
    <property type="component" value="Chromosome"/>
</dbReference>
<dbReference type="GO" id="GO:0003861">
    <property type="term" value="F:3-isopropylmalate dehydratase activity"/>
    <property type="evidence" value="ECO:0007669"/>
    <property type="project" value="UniProtKB-UniRule"/>
</dbReference>
<dbReference type="GO" id="GO:0051539">
    <property type="term" value="F:4 iron, 4 sulfur cluster binding"/>
    <property type="evidence" value="ECO:0007669"/>
    <property type="project" value="UniProtKB-KW"/>
</dbReference>
<dbReference type="GO" id="GO:0046872">
    <property type="term" value="F:metal ion binding"/>
    <property type="evidence" value="ECO:0007669"/>
    <property type="project" value="UniProtKB-KW"/>
</dbReference>
<dbReference type="GO" id="GO:0009098">
    <property type="term" value="P:L-leucine biosynthetic process"/>
    <property type="evidence" value="ECO:0007669"/>
    <property type="project" value="UniProtKB-UniRule"/>
</dbReference>
<dbReference type="CDD" id="cd01583">
    <property type="entry name" value="IPMI"/>
    <property type="match status" value="1"/>
</dbReference>
<dbReference type="Gene3D" id="3.30.499.10">
    <property type="entry name" value="Aconitase, domain 3"/>
    <property type="match status" value="2"/>
</dbReference>
<dbReference type="HAMAP" id="MF_01026">
    <property type="entry name" value="LeuC_type1"/>
    <property type="match status" value="1"/>
</dbReference>
<dbReference type="InterPro" id="IPR004430">
    <property type="entry name" value="3-IsopropMal_deHydase_lsu"/>
</dbReference>
<dbReference type="InterPro" id="IPR015931">
    <property type="entry name" value="Acnase/IPM_dHydase_lsu_aba_1/3"/>
</dbReference>
<dbReference type="InterPro" id="IPR001030">
    <property type="entry name" value="Acoase/IPM_deHydtase_lsu_aba"/>
</dbReference>
<dbReference type="InterPro" id="IPR018136">
    <property type="entry name" value="Aconitase_4Fe-4S_BS"/>
</dbReference>
<dbReference type="InterPro" id="IPR036008">
    <property type="entry name" value="Aconitase_4Fe-4S_dom"/>
</dbReference>
<dbReference type="InterPro" id="IPR050067">
    <property type="entry name" value="IPM_dehydratase_rel_enz"/>
</dbReference>
<dbReference type="InterPro" id="IPR033941">
    <property type="entry name" value="IPMI_cat"/>
</dbReference>
<dbReference type="NCBIfam" id="TIGR00170">
    <property type="entry name" value="leuC"/>
    <property type="match status" value="1"/>
</dbReference>
<dbReference type="NCBIfam" id="NF004016">
    <property type="entry name" value="PRK05478.1"/>
    <property type="match status" value="1"/>
</dbReference>
<dbReference type="NCBIfam" id="NF009116">
    <property type="entry name" value="PRK12466.1"/>
    <property type="match status" value="1"/>
</dbReference>
<dbReference type="PANTHER" id="PTHR43822:SF9">
    <property type="entry name" value="3-ISOPROPYLMALATE DEHYDRATASE"/>
    <property type="match status" value="1"/>
</dbReference>
<dbReference type="PANTHER" id="PTHR43822">
    <property type="entry name" value="HOMOACONITASE, MITOCHONDRIAL-RELATED"/>
    <property type="match status" value="1"/>
</dbReference>
<dbReference type="Pfam" id="PF00330">
    <property type="entry name" value="Aconitase"/>
    <property type="match status" value="1"/>
</dbReference>
<dbReference type="PRINTS" id="PR00415">
    <property type="entry name" value="ACONITASE"/>
</dbReference>
<dbReference type="SUPFAM" id="SSF53732">
    <property type="entry name" value="Aconitase iron-sulfur domain"/>
    <property type="match status" value="1"/>
</dbReference>
<dbReference type="PROSITE" id="PS00450">
    <property type="entry name" value="ACONITASE_1"/>
    <property type="match status" value="1"/>
</dbReference>
<dbReference type="PROSITE" id="PS01244">
    <property type="entry name" value="ACONITASE_2"/>
    <property type="match status" value="1"/>
</dbReference>
<evidence type="ECO:0000255" key="1">
    <source>
        <dbReference type="HAMAP-Rule" id="MF_01026"/>
    </source>
</evidence>
<sequence length="472" mass="51837">MGKTLYEKVWEAHEVRKLKNGQSQLFIDLHLLHEVTSPQAFGMLKDLGLRVRYPHRTFATVDHIVPTHDRTEPFQDPLAQSMLEALRANTREHGITFFDLGSGNQGIVHVIGPQLGLTQPGMTIACGDSHTSTHGAFGAVAFGIGTSQVRDVLATQTLAAQKLKVRRINVEGRLAPGVYAKDVILHIIRHLGVKGGLGYAYEYGGSAVEAMDMESRMTLCNMSIEGGARIGYVNPDETTFQYLEGRPYVPKGSEWEEAKRRWLAWRSDPDASYDDVVTFRAEEIAPTVTWGITPGQAIPIDGRIPLLEELPEEERPVAEEALAYMGFRPGQPIKGVPIQVAFIGSCTNARLSDLREVARYLKGHKVKKGVRALVVPGSEWVARKAEEEGIAEVFREAGFEWRMPGCSMCLAMNPDRLEGDELCASSSNRNYKGRMGSPRGRTVLMSPLMVAAAAVAGEIADAREVFGLAGVR</sequence>
<comment type="function">
    <text evidence="1">Catalyzes the isomerization between 2-isopropylmalate and 3-isopropylmalate, via the formation of 2-isopropylmaleate.</text>
</comment>
<comment type="catalytic activity">
    <reaction evidence="1">
        <text>(2R,3S)-3-isopropylmalate = (2S)-2-isopropylmalate</text>
        <dbReference type="Rhea" id="RHEA:32287"/>
        <dbReference type="ChEBI" id="CHEBI:1178"/>
        <dbReference type="ChEBI" id="CHEBI:35121"/>
        <dbReference type="EC" id="4.2.1.33"/>
    </reaction>
</comment>
<comment type="cofactor">
    <cofactor evidence="1">
        <name>[4Fe-4S] cluster</name>
        <dbReference type="ChEBI" id="CHEBI:49883"/>
    </cofactor>
    <text evidence="1">Binds 1 [4Fe-4S] cluster per subunit.</text>
</comment>
<comment type="pathway">
    <text evidence="1">Amino-acid biosynthesis; L-leucine biosynthesis; L-leucine from 3-methyl-2-oxobutanoate: step 2/4.</text>
</comment>
<comment type="subunit">
    <text evidence="1">Heterodimer of LeuC and LeuD.</text>
</comment>
<comment type="similarity">
    <text evidence="1">Belongs to the aconitase/IPM isomerase family. LeuC type 1 subfamily.</text>
</comment>
<feature type="chain" id="PRO_0000076834" description="3-isopropylmalate dehydratase large subunit">
    <location>
        <begin position="1"/>
        <end position="472"/>
    </location>
</feature>
<feature type="binding site" evidence="1">
    <location>
        <position position="346"/>
    </location>
    <ligand>
        <name>[4Fe-4S] cluster</name>
        <dbReference type="ChEBI" id="CHEBI:49883"/>
    </ligand>
</feature>
<feature type="binding site" evidence="1">
    <location>
        <position position="406"/>
    </location>
    <ligand>
        <name>[4Fe-4S] cluster</name>
        <dbReference type="ChEBI" id="CHEBI:49883"/>
    </ligand>
</feature>
<feature type="binding site" evidence="1">
    <location>
        <position position="409"/>
    </location>
    <ligand>
        <name>[4Fe-4S] cluster</name>
        <dbReference type="ChEBI" id="CHEBI:49883"/>
    </ligand>
</feature>
<name>LEUC_THET8</name>
<accession>Q9ZND5</accession>
<accession>Q5SIY6</accession>
<keyword id="KW-0004">4Fe-4S</keyword>
<keyword id="KW-0028">Amino-acid biosynthesis</keyword>
<keyword id="KW-0100">Branched-chain amino acid biosynthesis</keyword>
<keyword id="KW-0408">Iron</keyword>
<keyword id="KW-0411">Iron-sulfur</keyword>
<keyword id="KW-0432">Leucine biosynthesis</keyword>
<keyword id="KW-0456">Lyase</keyword>
<keyword id="KW-0479">Metal-binding</keyword>
<keyword id="KW-1185">Reference proteome</keyword>
<reference key="1">
    <citation type="journal article" date="1998" name="Gene">
        <title>The organization of the leuC, leuD and leuB genes of the extreme thermophile, Thermus thermophilus.</title>
        <authorList>
            <person name="Tamakoshi M."/>
            <person name="Yamagishi A."/>
            <person name="Oshima T."/>
        </authorList>
    </citation>
    <scope>NUCLEOTIDE SEQUENCE [GENOMIC DNA]</scope>
</reference>
<reference key="2">
    <citation type="submission" date="2004-11" db="EMBL/GenBank/DDBJ databases">
        <title>Complete genome sequence of Thermus thermophilus HB8.</title>
        <authorList>
            <person name="Masui R."/>
            <person name="Kurokawa K."/>
            <person name="Nakagawa N."/>
            <person name="Tokunaga F."/>
            <person name="Koyama Y."/>
            <person name="Shibata T."/>
            <person name="Oshima T."/>
            <person name="Yokoyama S."/>
            <person name="Yasunaga T."/>
            <person name="Kuramitsu S."/>
        </authorList>
    </citation>
    <scope>NUCLEOTIDE SEQUENCE [LARGE SCALE GENOMIC DNA]</scope>
    <source>
        <strain>ATCC 27634 / DSM 579 / HB8</strain>
    </source>
</reference>
<proteinExistence type="inferred from homology"/>
<organism>
    <name type="scientific">Thermus thermophilus (strain ATCC 27634 / DSM 579 / HB8)</name>
    <dbReference type="NCBI Taxonomy" id="300852"/>
    <lineage>
        <taxon>Bacteria</taxon>
        <taxon>Thermotogati</taxon>
        <taxon>Deinococcota</taxon>
        <taxon>Deinococci</taxon>
        <taxon>Thermales</taxon>
        <taxon>Thermaceae</taxon>
        <taxon>Thermus</taxon>
    </lineage>
</organism>
<gene>
    <name evidence="1" type="primary">leuC</name>
    <name type="ordered locus">TTHA1228</name>
</gene>